<feature type="chain" id="PRO_0000337910" description="Cell cycle protein GpsB">
    <location>
        <begin position="1"/>
        <end position="111"/>
    </location>
</feature>
<feature type="coiled-coil region" evidence="1">
    <location>
        <begin position="34"/>
        <end position="72"/>
    </location>
</feature>
<name>GPSB_BACCN</name>
<proteinExistence type="inferred from homology"/>
<comment type="function">
    <text evidence="1">Divisome component that associates with the complex late in its assembly, after the Z-ring is formed, and is dependent on DivIC and PBP2B for its recruitment to the divisome. Together with EzrA, is a key component of the system that regulates PBP1 localization during cell cycle progression. Its main role could be the removal of PBP1 from the cell pole after pole maturation is completed. Also contributes to the recruitment of PBP1 to the division complex. Not essential for septum formation.</text>
</comment>
<comment type="subunit">
    <text evidence="1">Forms polymers through the coiled coil domains. Interacts with PBP1, MreC and EzrA.</text>
</comment>
<comment type="subcellular location">
    <subcellularLocation>
        <location evidence="1">Cytoplasm</location>
    </subcellularLocation>
    <text evidence="1">Shuttles between the lateral wall and the division site in a cell cycle-dependent manner.</text>
</comment>
<comment type="similarity">
    <text evidence="1">Belongs to the GpsB family.</text>
</comment>
<dbReference type="EMBL" id="CP000764">
    <property type="protein sequence ID" value="ABS21603.1"/>
    <property type="molecule type" value="Genomic_DNA"/>
</dbReference>
<dbReference type="RefSeq" id="WP_012093770.1">
    <property type="nucleotide sequence ID" value="NC_009674.1"/>
</dbReference>
<dbReference type="SMR" id="A7GN95"/>
<dbReference type="STRING" id="315749.Bcer98_1281"/>
<dbReference type="GeneID" id="33896629"/>
<dbReference type="KEGG" id="bcy:Bcer98_1281"/>
<dbReference type="eggNOG" id="COG3599">
    <property type="taxonomic scope" value="Bacteria"/>
</dbReference>
<dbReference type="HOGENOM" id="CLU_140309_1_0_9"/>
<dbReference type="OrthoDB" id="389699at2"/>
<dbReference type="Proteomes" id="UP000002300">
    <property type="component" value="Chromosome"/>
</dbReference>
<dbReference type="GO" id="GO:0005737">
    <property type="term" value="C:cytoplasm"/>
    <property type="evidence" value="ECO:0007669"/>
    <property type="project" value="UniProtKB-SubCell"/>
</dbReference>
<dbReference type="GO" id="GO:0051301">
    <property type="term" value="P:cell division"/>
    <property type="evidence" value="ECO:0007669"/>
    <property type="project" value="UniProtKB-UniRule"/>
</dbReference>
<dbReference type="GO" id="GO:0008360">
    <property type="term" value="P:regulation of cell shape"/>
    <property type="evidence" value="ECO:0007669"/>
    <property type="project" value="UniProtKB-UniRule"/>
</dbReference>
<dbReference type="Gene3D" id="6.10.250.660">
    <property type="match status" value="1"/>
</dbReference>
<dbReference type="HAMAP" id="MF_02011">
    <property type="entry name" value="GpsB"/>
    <property type="match status" value="1"/>
</dbReference>
<dbReference type="InterPro" id="IPR011229">
    <property type="entry name" value="Cell_cycle_GpsB"/>
</dbReference>
<dbReference type="InterPro" id="IPR019933">
    <property type="entry name" value="DivIVA_domain"/>
</dbReference>
<dbReference type="InterPro" id="IPR007793">
    <property type="entry name" value="DivIVA_fam"/>
</dbReference>
<dbReference type="NCBIfam" id="TIGR03544">
    <property type="entry name" value="DivI1A_domain"/>
    <property type="match status" value="1"/>
</dbReference>
<dbReference type="NCBIfam" id="NF010725">
    <property type="entry name" value="PRK14127.1"/>
    <property type="match status" value="1"/>
</dbReference>
<dbReference type="PANTHER" id="PTHR35794:SF1">
    <property type="entry name" value="CELL CYCLE PROTEIN GPSB"/>
    <property type="match status" value="1"/>
</dbReference>
<dbReference type="PANTHER" id="PTHR35794">
    <property type="entry name" value="CELL DIVISION PROTEIN DIVIVA"/>
    <property type="match status" value="1"/>
</dbReference>
<dbReference type="Pfam" id="PF05103">
    <property type="entry name" value="DivIVA"/>
    <property type="match status" value="1"/>
</dbReference>
<dbReference type="PIRSF" id="PIRSF029938">
    <property type="entry name" value="UCP029938"/>
    <property type="match status" value="1"/>
</dbReference>
<accession>A7GN95</accession>
<evidence type="ECO:0000255" key="1">
    <source>
        <dbReference type="HAMAP-Rule" id="MF_02011"/>
    </source>
</evidence>
<organism>
    <name type="scientific">Bacillus cytotoxicus (strain DSM 22905 / CIP 110041 / 391-98 / NVH 391-98)</name>
    <dbReference type="NCBI Taxonomy" id="315749"/>
    <lineage>
        <taxon>Bacteria</taxon>
        <taxon>Bacillati</taxon>
        <taxon>Bacillota</taxon>
        <taxon>Bacilli</taxon>
        <taxon>Bacillales</taxon>
        <taxon>Bacillaceae</taxon>
        <taxon>Bacillus</taxon>
        <taxon>Bacillus cereus group</taxon>
    </lineage>
</organism>
<keyword id="KW-0131">Cell cycle</keyword>
<keyword id="KW-0132">Cell division</keyword>
<keyword id="KW-0133">Cell shape</keyword>
<keyword id="KW-0175">Coiled coil</keyword>
<keyword id="KW-0963">Cytoplasm</keyword>
<reference key="1">
    <citation type="journal article" date="2008" name="Chem. Biol. Interact.">
        <title>Extending the Bacillus cereus group genomics to putative food-borne pathogens of different toxicity.</title>
        <authorList>
            <person name="Lapidus A."/>
            <person name="Goltsman E."/>
            <person name="Auger S."/>
            <person name="Galleron N."/>
            <person name="Segurens B."/>
            <person name="Dossat C."/>
            <person name="Land M.L."/>
            <person name="Broussolle V."/>
            <person name="Brillard J."/>
            <person name="Guinebretiere M.-H."/>
            <person name="Sanchis V."/>
            <person name="Nguen-the C."/>
            <person name="Lereclus D."/>
            <person name="Richardson P."/>
            <person name="Wincker P."/>
            <person name="Weissenbach J."/>
            <person name="Ehrlich S.D."/>
            <person name="Sorokin A."/>
        </authorList>
    </citation>
    <scope>NUCLEOTIDE SEQUENCE [LARGE SCALE GENOMIC DNA]</scope>
    <source>
        <strain>DSM 22905 / CIP 110041 / 391-98 / NVH 391-98</strain>
    </source>
</reference>
<protein>
    <recommendedName>
        <fullName evidence="1">Cell cycle protein GpsB</fullName>
    </recommendedName>
    <alternativeName>
        <fullName evidence="1">Guiding PBP1-shuttling protein</fullName>
    </alternativeName>
</protein>
<gene>
    <name evidence="1" type="primary">gpsB</name>
    <name type="ordered locus">Bcer98_1281</name>
</gene>
<sequence>MISDKIKLTAKDILEKEFKTGMRGYQQEEVDKFLDMIIKDYEVFHKELEQLQQQNARLKRELEEQKLAAAQAPQQTIPTPAAQPVYSNTNTDILKRLSNLEKAVFGSKLYE</sequence>